<gene>
    <name evidence="1" type="primary">apaG</name>
    <name type="ordered locus">ECIAI1_0052</name>
</gene>
<evidence type="ECO:0000255" key="1">
    <source>
        <dbReference type="HAMAP-Rule" id="MF_00791"/>
    </source>
</evidence>
<protein>
    <recommendedName>
        <fullName evidence="1">Protein ApaG</fullName>
    </recommendedName>
</protein>
<accession>B7M0E7</accession>
<reference key="1">
    <citation type="journal article" date="2009" name="PLoS Genet.">
        <title>Organised genome dynamics in the Escherichia coli species results in highly diverse adaptive paths.</title>
        <authorList>
            <person name="Touchon M."/>
            <person name="Hoede C."/>
            <person name="Tenaillon O."/>
            <person name="Barbe V."/>
            <person name="Baeriswyl S."/>
            <person name="Bidet P."/>
            <person name="Bingen E."/>
            <person name="Bonacorsi S."/>
            <person name="Bouchier C."/>
            <person name="Bouvet O."/>
            <person name="Calteau A."/>
            <person name="Chiapello H."/>
            <person name="Clermont O."/>
            <person name="Cruveiller S."/>
            <person name="Danchin A."/>
            <person name="Diard M."/>
            <person name="Dossat C."/>
            <person name="Karoui M.E."/>
            <person name="Frapy E."/>
            <person name="Garry L."/>
            <person name="Ghigo J.M."/>
            <person name="Gilles A.M."/>
            <person name="Johnson J."/>
            <person name="Le Bouguenec C."/>
            <person name="Lescat M."/>
            <person name="Mangenot S."/>
            <person name="Martinez-Jehanne V."/>
            <person name="Matic I."/>
            <person name="Nassif X."/>
            <person name="Oztas S."/>
            <person name="Petit M.A."/>
            <person name="Pichon C."/>
            <person name="Rouy Z."/>
            <person name="Ruf C.S."/>
            <person name="Schneider D."/>
            <person name="Tourret J."/>
            <person name="Vacherie B."/>
            <person name="Vallenet D."/>
            <person name="Medigue C."/>
            <person name="Rocha E.P.C."/>
            <person name="Denamur E."/>
        </authorList>
    </citation>
    <scope>NUCLEOTIDE SEQUENCE [LARGE SCALE GENOMIC DNA]</scope>
    <source>
        <strain>IAI1</strain>
    </source>
</reference>
<dbReference type="EMBL" id="CU928160">
    <property type="protein sequence ID" value="CAQ96942.1"/>
    <property type="molecule type" value="Genomic_DNA"/>
</dbReference>
<dbReference type="RefSeq" id="WP_000610901.1">
    <property type="nucleotide sequence ID" value="NC_011741.1"/>
</dbReference>
<dbReference type="SMR" id="B7M0E7"/>
<dbReference type="GeneID" id="93777385"/>
<dbReference type="KEGG" id="ecr:ECIAI1_0052"/>
<dbReference type="HOGENOM" id="CLU_128074_0_0_6"/>
<dbReference type="GO" id="GO:0070987">
    <property type="term" value="P:error-free translesion synthesis"/>
    <property type="evidence" value="ECO:0007669"/>
    <property type="project" value="TreeGrafter"/>
</dbReference>
<dbReference type="Gene3D" id="2.60.40.1470">
    <property type="entry name" value="ApaG domain"/>
    <property type="match status" value="1"/>
</dbReference>
<dbReference type="HAMAP" id="MF_00791">
    <property type="entry name" value="ApaG"/>
    <property type="match status" value="1"/>
</dbReference>
<dbReference type="InterPro" id="IPR007474">
    <property type="entry name" value="ApaG_domain"/>
</dbReference>
<dbReference type="InterPro" id="IPR036767">
    <property type="entry name" value="ApaG_sf"/>
</dbReference>
<dbReference type="InterPro" id="IPR023065">
    <property type="entry name" value="Uncharacterised_ApaG"/>
</dbReference>
<dbReference type="NCBIfam" id="NF003967">
    <property type="entry name" value="PRK05461.1"/>
    <property type="match status" value="1"/>
</dbReference>
<dbReference type="PANTHER" id="PTHR14289">
    <property type="entry name" value="F-BOX ONLY PROTEIN 3"/>
    <property type="match status" value="1"/>
</dbReference>
<dbReference type="PANTHER" id="PTHR14289:SF16">
    <property type="entry name" value="POLYMERASE DELTA-INTERACTING PROTEIN 2"/>
    <property type="match status" value="1"/>
</dbReference>
<dbReference type="Pfam" id="PF04379">
    <property type="entry name" value="DUF525"/>
    <property type="match status" value="1"/>
</dbReference>
<dbReference type="SUPFAM" id="SSF110069">
    <property type="entry name" value="ApaG-like"/>
    <property type="match status" value="1"/>
</dbReference>
<dbReference type="PROSITE" id="PS51087">
    <property type="entry name" value="APAG"/>
    <property type="match status" value="1"/>
</dbReference>
<organism>
    <name type="scientific">Escherichia coli O8 (strain IAI1)</name>
    <dbReference type="NCBI Taxonomy" id="585034"/>
    <lineage>
        <taxon>Bacteria</taxon>
        <taxon>Pseudomonadati</taxon>
        <taxon>Pseudomonadota</taxon>
        <taxon>Gammaproteobacteria</taxon>
        <taxon>Enterobacterales</taxon>
        <taxon>Enterobacteriaceae</taxon>
        <taxon>Escherichia</taxon>
    </lineage>
</organism>
<proteinExistence type="inferred from homology"/>
<feature type="chain" id="PRO_1000133786" description="Protein ApaG">
    <location>
        <begin position="1"/>
        <end position="125"/>
    </location>
</feature>
<feature type="domain" description="ApaG" evidence="1">
    <location>
        <begin position="1"/>
        <end position="125"/>
    </location>
</feature>
<name>APAG_ECO8A</name>
<sequence length="125" mass="13867">MINSPRVCIQVQSVYIEAQSSPDNERYVFAYTVTIRNLGRAPVQLLGRYWLITNGNGRETEVQGEGVVGVQPLIAPGEEYQYTSGAIIETPLGTMQGHYEMIDENGVPFSIDIPVFRLAVPTLIH</sequence>